<name>MHPB1_PSEPU</name>
<sequence length="314" mass="33843">MSAYLHCLSHTPLVGYVDPVAEVLAEVDEVVAAARARIAAFDPQLVFLFAPDHYNGFFYDVMPSFCIGMAATAIGDFHSLAGPLDVPRETAEACAAAVLEAGVDAAVSYRMQVDHGFAQPLELLLGGLAEKPVVPVFINGVAVPLPGFQRARLLGEAIGRFARSTGKRVLFLGSGGLSHQPPVPELAKVDARMADRLLGSGRDLPTDERQARQQRVISAAEGFVADQNSLHPLNPEWDNHFLDLLEQRRFAELDGLGNAELSALAGKSTHEVKTWVTAFAALSAFGPYQAHERYYRPIPEWIAGFGSLSAHSLS</sequence>
<comment type="function">
    <text evidence="1">Catalyzes the non-heme iron(II)-dependent oxidative cleavage of 2,3-dihydroxyphenylpropionic acid and 2,3-dihydroxicinnamic acid into 2-hydroxy-6-ketononadienedioate and 2-hydroxy-6-ketononatrienedioate, respectively.</text>
</comment>
<comment type="catalytic activity">
    <reaction evidence="1">
        <text>3-(2,3-dihydroxyphenyl)propanoate + O2 = (2Z,4E)-2-hydroxy-6-oxonona-2,4-dienedioate + H(+)</text>
        <dbReference type="Rhea" id="RHEA:23840"/>
        <dbReference type="ChEBI" id="CHEBI:15378"/>
        <dbReference type="ChEBI" id="CHEBI:15379"/>
        <dbReference type="ChEBI" id="CHEBI:46951"/>
        <dbReference type="ChEBI" id="CHEBI:66887"/>
        <dbReference type="EC" id="1.13.11.16"/>
    </reaction>
</comment>
<comment type="catalytic activity">
    <reaction evidence="1">
        <text>(2E)-3-(2,3-dihydroxyphenyl)prop-2-enoate + O2 = (2Z,4E,7E)-2-hydroxy-6-oxonona-2,4,7-trienedioate + H(+)</text>
        <dbReference type="Rhea" id="RHEA:25054"/>
        <dbReference type="ChEBI" id="CHEBI:15378"/>
        <dbReference type="ChEBI" id="CHEBI:15379"/>
        <dbReference type="ChEBI" id="CHEBI:58642"/>
        <dbReference type="ChEBI" id="CHEBI:66888"/>
        <dbReference type="EC" id="1.13.11.16"/>
    </reaction>
</comment>
<comment type="cofactor">
    <cofactor evidence="1">
        <name>Fe(2+)</name>
        <dbReference type="ChEBI" id="CHEBI:29033"/>
    </cofactor>
</comment>
<comment type="pathway">
    <text evidence="1">Aromatic compound metabolism; 3-phenylpropanoate degradation.</text>
</comment>
<comment type="subunit">
    <text evidence="1">Homotetramer.</text>
</comment>
<comment type="similarity">
    <text evidence="1">Belongs to the LigB/MhpB extradiol dioxygenase family.</text>
</comment>
<feature type="chain" id="PRO_0000337662" description="2,3-dihydroxyphenylpropionate/2,3-dihydroxicinnamic acid 1,2-dioxygenase 1">
    <location>
        <begin position="1"/>
        <end position="314"/>
    </location>
</feature>
<feature type="active site" description="Proton donor" evidence="1">
    <location>
        <position position="115"/>
    </location>
</feature>
<feature type="active site" description="Proton acceptor" evidence="1">
    <location>
        <position position="179"/>
    </location>
</feature>
<dbReference type="EC" id="1.13.11.16" evidence="1"/>
<dbReference type="EMBL" id="AF534914">
    <property type="protein sequence ID" value="AAQ10534.1"/>
    <property type="molecule type" value="Genomic_DNA"/>
</dbReference>
<dbReference type="SMR" id="Q400K4"/>
<dbReference type="UniPathway" id="UPA00714"/>
<dbReference type="GO" id="GO:0047070">
    <property type="term" value="F:3-carboxyethylcatechol 2,3-dioxygenase activity"/>
    <property type="evidence" value="ECO:0007669"/>
    <property type="project" value="UniProtKB-UniRule"/>
</dbReference>
<dbReference type="GO" id="GO:0008198">
    <property type="term" value="F:ferrous iron binding"/>
    <property type="evidence" value="ECO:0007669"/>
    <property type="project" value="InterPro"/>
</dbReference>
<dbReference type="GO" id="GO:0019380">
    <property type="term" value="P:3-phenylpropionate catabolic process"/>
    <property type="evidence" value="ECO:0007669"/>
    <property type="project" value="UniProtKB-UniRule"/>
</dbReference>
<dbReference type="CDD" id="cd07365">
    <property type="entry name" value="MhpB_like"/>
    <property type="match status" value="1"/>
</dbReference>
<dbReference type="Gene3D" id="3.40.830.10">
    <property type="entry name" value="LigB-like"/>
    <property type="match status" value="1"/>
</dbReference>
<dbReference type="HAMAP" id="MF_01653">
    <property type="entry name" value="MhpB"/>
    <property type="match status" value="1"/>
</dbReference>
<dbReference type="InterPro" id="IPR023789">
    <property type="entry name" value="DHPP/DHXA_dioxygenase"/>
</dbReference>
<dbReference type="InterPro" id="IPR004183">
    <property type="entry name" value="Xdiol_dOase_suB"/>
</dbReference>
<dbReference type="NCBIfam" id="NF009907">
    <property type="entry name" value="PRK13370.1-1"/>
    <property type="match status" value="1"/>
</dbReference>
<dbReference type="NCBIfam" id="NF009908">
    <property type="entry name" value="PRK13370.1-2"/>
    <property type="match status" value="1"/>
</dbReference>
<dbReference type="NCBIfam" id="NF009910">
    <property type="entry name" value="PRK13370.1-4"/>
    <property type="match status" value="1"/>
</dbReference>
<dbReference type="Pfam" id="PF02900">
    <property type="entry name" value="LigB"/>
    <property type="match status" value="1"/>
</dbReference>
<dbReference type="SUPFAM" id="SSF53213">
    <property type="entry name" value="LigB-like"/>
    <property type="match status" value="1"/>
</dbReference>
<evidence type="ECO:0000255" key="1">
    <source>
        <dbReference type="HAMAP-Rule" id="MF_01653"/>
    </source>
</evidence>
<reference key="1">
    <citation type="submission" date="2002-08" db="EMBL/GenBank/DDBJ databases">
        <title>Cloning of genes involved in meta-cleavage pathways of Pseudomonas putida orc: nucleotide sequences of genes, characterization of two dioxygenases and identification of the orcinol pathway.</title>
        <authorList>
            <person name="Straganz G.D."/>
            <person name="Glieder A."/>
            <person name="Steiner W."/>
        </authorList>
    </citation>
    <scope>NUCLEOTIDE SEQUENCE [GENOMIC DNA]</scope>
    <source>
        <strain>ORC</strain>
    </source>
</reference>
<proteinExistence type="inferred from homology"/>
<keyword id="KW-0058">Aromatic hydrocarbons catabolism</keyword>
<keyword id="KW-0223">Dioxygenase</keyword>
<keyword id="KW-0408">Iron</keyword>
<keyword id="KW-0560">Oxidoreductase</keyword>
<organism>
    <name type="scientific">Pseudomonas putida</name>
    <name type="common">Arthrobacter siderocapsulatus</name>
    <dbReference type="NCBI Taxonomy" id="303"/>
    <lineage>
        <taxon>Bacteria</taxon>
        <taxon>Pseudomonadati</taxon>
        <taxon>Pseudomonadota</taxon>
        <taxon>Gammaproteobacteria</taxon>
        <taxon>Pseudomonadales</taxon>
        <taxon>Pseudomonadaceae</taxon>
        <taxon>Pseudomonas</taxon>
    </lineage>
</organism>
<protein>
    <recommendedName>
        <fullName evidence="1">2,3-dihydroxyphenylpropionate/2,3-dihydroxicinnamic acid 1,2-dioxygenase 1</fullName>
        <ecNumber evidence="1">1.13.11.16</ecNumber>
    </recommendedName>
    <alternativeName>
        <fullName evidence="1">3-carboxyethylcatechol 2,3-dioxygenase 1</fullName>
    </alternativeName>
</protein>
<gene>
    <name evidence="1" type="primary">mhpB1</name>
    <name type="synonym">orcB</name>
</gene>
<accession>Q400K4</accession>